<name>PRI1A_XENLA</name>
<protein>
    <recommendedName>
        <fullName>Prickle-like protein 1-A</fullName>
    </recommendedName>
    <alternativeName>
        <fullName>XPk-A</fullName>
        <shortName>XpkA</shortName>
    </alternativeName>
</protein>
<accession>Q90Z06</accession>
<accession>Q4KLX8</accession>
<sequence length="835" mass="95011">MPLEMDQKVNKLTFGCQRSSTSDDDSGCAMEEYTWVPPGLRLEQVQLYFACLPEEKIPYVNSVGEKYRIKQLLYQLPPHDNEVRYCQSLSEEEKKELQMFSAQRKKEALGRGNIKMLSRAVMHATCEKCGEKINGGEVAIFVSRAGPGVCWHPSCFVCSTCNELLVDLIYFYQDGKIHCGRHHAELLKPRCSACDEIIFADECTEAEGRHWHMNHFCCYECETVLGGQRYIMKDGRPFCCGCFESHYAEYCESCGEHIGVDHAQMTYDGQHWHATETCFSCAQCKVSLLGCPFLPKKGRIYCCKACSLGEDVHASDSSDSAFQSARSRESRRSVRMGKSSRSADQCRQSLLLSPAVNYKFPGMFGNADDTLSRKMDDLSMSRQGAGFDNDTWKARDEQETAEDHEEWAEHDDYMTQLLLKFGEKGLFQQPPEDNRSNDHWMSENIKGKNDLQRNNRNQSLASKKYQSDMYWAQSQDGLGDSAYGSHPGPASSRKLQELDMDHGASGYMHEKMPWYKRSLECLSNNLKPQNENICDSMDSLALSNITGASVDAESKSRPSLFSYQNFQELNTRDFDKMSNMGTLNSSMLNRSTESLKSLNSEICQEKPPPEEKPMHTSALKRSKSQTRPQVKFSDDVIDNGDYSSIEIRRPPMSERSRRRVYNSEEQSQRPHHHHHHRRRKSRKSRSENALHLATDSKSSGKERKRSYTAEDYERLFHNKSAHEVQAYIQNADLFGQYSNAASNVGLPSQVVDKFLGLYGEDEDSWCSTCSSSSSDSEEEGYFLGQPIPKPRPQRYQYFSDDLCSPTNALSSSQFSQRTSKSKKKKGHKGKNCIIS</sequence>
<feature type="chain" id="PRO_0000288829" description="Prickle-like protein 1-A">
    <location>
        <begin position="1"/>
        <end position="832"/>
    </location>
</feature>
<feature type="propeptide" id="PRO_0000396715" description="Removed in mature form" evidence="1">
    <location>
        <begin position="833"/>
        <end position="835"/>
    </location>
</feature>
<feature type="domain" description="PET" evidence="3">
    <location>
        <begin position="14"/>
        <end position="122"/>
    </location>
</feature>
<feature type="domain" description="LIM zinc-binding 1" evidence="2">
    <location>
        <begin position="124"/>
        <end position="188"/>
    </location>
</feature>
<feature type="domain" description="LIM zinc-binding 2" evidence="2">
    <location>
        <begin position="189"/>
        <end position="249"/>
    </location>
</feature>
<feature type="domain" description="LIM zinc-binding 3" evidence="2">
    <location>
        <begin position="250"/>
        <end position="313"/>
    </location>
</feature>
<feature type="region of interest" description="Disordered" evidence="4">
    <location>
        <begin position="312"/>
        <end position="346"/>
    </location>
</feature>
<feature type="region of interest" description="Disordered" evidence="4">
    <location>
        <begin position="426"/>
        <end position="455"/>
    </location>
</feature>
<feature type="region of interest" description="Disordered" evidence="4">
    <location>
        <begin position="603"/>
        <end position="706"/>
    </location>
</feature>
<feature type="region of interest" description="Disordered" evidence="4">
    <location>
        <begin position="769"/>
        <end position="835"/>
    </location>
</feature>
<feature type="compositionally biased region" description="Basic and acidic residues" evidence="4">
    <location>
        <begin position="432"/>
        <end position="453"/>
    </location>
</feature>
<feature type="compositionally biased region" description="Basic and acidic residues" evidence="4">
    <location>
        <begin position="603"/>
        <end position="614"/>
    </location>
</feature>
<feature type="compositionally biased region" description="Basic and acidic residues" evidence="4">
    <location>
        <begin position="646"/>
        <end position="655"/>
    </location>
</feature>
<feature type="compositionally biased region" description="Basic residues" evidence="4">
    <location>
        <begin position="669"/>
        <end position="683"/>
    </location>
</feature>
<feature type="compositionally biased region" description="Basic residues" evidence="4">
    <location>
        <begin position="819"/>
        <end position="835"/>
    </location>
</feature>
<feature type="modified residue" description="Cysteine methyl ester" evidence="1">
    <location>
        <position position="832"/>
    </location>
</feature>
<feature type="lipid moiety-binding region" description="S-farnesyl cysteine" evidence="1">
    <location>
        <position position="832"/>
    </location>
</feature>
<feature type="sequence conflict" description="In Ref. 2; AAH98954." evidence="9" ref="2">
    <original>A</original>
    <variation>T</variation>
    <location>
        <position position="726"/>
    </location>
</feature>
<evidence type="ECO:0000250" key="1"/>
<evidence type="ECO:0000255" key="2">
    <source>
        <dbReference type="PROSITE-ProRule" id="PRU00125"/>
    </source>
</evidence>
<evidence type="ECO:0000255" key="3">
    <source>
        <dbReference type="PROSITE-ProRule" id="PRU00636"/>
    </source>
</evidence>
<evidence type="ECO:0000256" key="4">
    <source>
        <dbReference type="SAM" id="MobiDB-lite"/>
    </source>
</evidence>
<evidence type="ECO:0000269" key="5">
    <source>
    </source>
</evidence>
<evidence type="ECO:0000269" key="6">
    <source>
    </source>
</evidence>
<evidence type="ECO:0000269" key="7">
    <source>
    </source>
</evidence>
<evidence type="ECO:0000269" key="8">
    <source>
    </source>
</evidence>
<evidence type="ECO:0000305" key="9"/>
<dbReference type="EMBL" id="AF387815">
    <property type="protein sequence ID" value="AAK70878.1"/>
    <property type="molecule type" value="mRNA"/>
</dbReference>
<dbReference type="EMBL" id="BC098954">
    <property type="protein sequence ID" value="AAH98954.1"/>
    <property type="molecule type" value="mRNA"/>
</dbReference>
<dbReference type="RefSeq" id="NP_001082157.1">
    <property type="nucleotide sequence ID" value="NM_001088688.1"/>
</dbReference>
<dbReference type="SMR" id="Q90Z06"/>
<dbReference type="BioGRID" id="99590">
    <property type="interactions" value="1"/>
</dbReference>
<dbReference type="DNASU" id="398256"/>
<dbReference type="GeneID" id="398256"/>
<dbReference type="KEGG" id="xla:398256"/>
<dbReference type="AGR" id="Xenbase:XB-GENE-865659"/>
<dbReference type="CTD" id="398256"/>
<dbReference type="Xenbase" id="XB-GENE-865659">
    <property type="gene designation" value="prickle1.S"/>
</dbReference>
<dbReference type="OMA" id="YSEYCEA"/>
<dbReference type="OrthoDB" id="10069167at2759"/>
<dbReference type="Proteomes" id="UP000186698">
    <property type="component" value="Chromosome 3S"/>
</dbReference>
<dbReference type="Bgee" id="398256">
    <property type="expression patterns" value="Expressed in gastrula and 18 other cell types or tissues"/>
</dbReference>
<dbReference type="GO" id="GO:0005886">
    <property type="term" value="C:plasma membrane"/>
    <property type="evidence" value="ECO:0007669"/>
    <property type="project" value="UniProtKB-SubCell"/>
</dbReference>
<dbReference type="GO" id="GO:0008270">
    <property type="term" value="F:zinc ion binding"/>
    <property type="evidence" value="ECO:0007669"/>
    <property type="project" value="InterPro"/>
</dbReference>
<dbReference type="GO" id="GO:0009948">
    <property type="term" value="P:anterior/posterior axis specification"/>
    <property type="evidence" value="ECO:0000315"/>
    <property type="project" value="UniProtKB"/>
</dbReference>
<dbReference type="GO" id="GO:0060027">
    <property type="term" value="P:convergent extension involved in gastrulation"/>
    <property type="evidence" value="ECO:0000315"/>
    <property type="project" value="UniProtKB"/>
</dbReference>
<dbReference type="GO" id="GO:0001736">
    <property type="term" value="P:establishment of planar polarity"/>
    <property type="evidence" value="ECO:0000315"/>
    <property type="project" value="UniProtKB"/>
</dbReference>
<dbReference type="CDD" id="cd09483">
    <property type="entry name" value="LIM1_Prickle_1"/>
    <property type="match status" value="1"/>
</dbReference>
<dbReference type="CDD" id="cd09418">
    <property type="entry name" value="LIM2_Prickle"/>
    <property type="match status" value="1"/>
</dbReference>
<dbReference type="CDD" id="cd09420">
    <property type="entry name" value="LIM3_Prickle"/>
    <property type="match status" value="1"/>
</dbReference>
<dbReference type="CDD" id="cd09827">
    <property type="entry name" value="PET_Prickle"/>
    <property type="match status" value="1"/>
</dbReference>
<dbReference type="FunFam" id="2.10.110.10:FF:000022">
    <property type="entry name" value="prickle-like protein 2 isoform X1"/>
    <property type="match status" value="1"/>
</dbReference>
<dbReference type="FunFam" id="2.10.110.10:FF:000035">
    <property type="entry name" value="prickle-like protein 2 isoform X1"/>
    <property type="match status" value="1"/>
</dbReference>
<dbReference type="FunFam" id="2.10.110.10:FF:000005">
    <property type="entry name" value="Testin isoform 1"/>
    <property type="match status" value="1"/>
</dbReference>
<dbReference type="Gene3D" id="2.10.110.10">
    <property type="entry name" value="Cysteine Rich Protein"/>
    <property type="match status" value="3"/>
</dbReference>
<dbReference type="InterPro" id="IPR033726">
    <property type="entry name" value="LIM2_prickle"/>
</dbReference>
<dbReference type="InterPro" id="IPR033727">
    <property type="entry name" value="LIM3_prickle"/>
</dbReference>
<dbReference type="InterPro" id="IPR010442">
    <property type="entry name" value="PET_domain"/>
</dbReference>
<dbReference type="InterPro" id="IPR033723">
    <property type="entry name" value="PET_prickle"/>
</dbReference>
<dbReference type="InterPro" id="IPR047120">
    <property type="entry name" value="Pk/Esn/Tes"/>
</dbReference>
<dbReference type="InterPro" id="IPR001781">
    <property type="entry name" value="Znf_LIM"/>
</dbReference>
<dbReference type="PANTHER" id="PTHR24211">
    <property type="entry name" value="LIM DOMAIN-CONTAINING PROTEIN"/>
    <property type="match status" value="1"/>
</dbReference>
<dbReference type="PANTHER" id="PTHR24211:SF15">
    <property type="entry name" value="PRICKLE-LIKE PROTEIN 1"/>
    <property type="match status" value="1"/>
</dbReference>
<dbReference type="Pfam" id="PF00412">
    <property type="entry name" value="LIM"/>
    <property type="match status" value="2"/>
</dbReference>
<dbReference type="Pfam" id="PF06297">
    <property type="entry name" value="PET"/>
    <property type="match status" value="1"/>
</dbReference>
<dbReference type="SMART" id="SM00132">
    <property type="entry name" value="LIM"/>
    <property type="match status" value="3"/>
</dbReference>
<dbReference type="SUPFAM" id="SSF57716">
    <property type="entry name" value="Glucocorticoid receptor-like (DNA-binding domain)"/>
    <property type="match status" value="2"/>
</dbReference>
<dbReference type="PROSITE" id="PS00478">
    <property type="entry name" value="LIM_DOMAIN_1"/>
    <property type="match status" value="2"/>
</dbReference>
<dbReference type="PROSITE" id="PS50023">
    <property type="entry name" value="LIM_DOMAIN_2"/>
    <property type="match status" value="3"/>
</dbReference>
<dbReference type="PROSITE" id="PS51303">
    <property type="entry name" value="PET"/>
    <property type="match status" value="1"/>
</dbReference>
<proteinExistence type="evidence at protein level"/>
<comment type="function">
    <text evidence="6 7 8">Acts in a planar cell polarity (PCP) complex; polarization along the apical/basal axis of epithelial cells. Regulates the polarized assembly of fibronectrin on the surface of the mesoderm during gastrulation. Essential for gastrulation cell movements, cooperating with dvl2/dsh to activate jnk. Acts together with tes to control axial elongation.</text>
</comment>
<comment type="subunit">
    <text evidence="6">Interacts with dvl2/dsh and mapk8/jnk1.</text>
</comment>
<comment type="subcellular location">
    <subcellularLocation>
        <location evidence="1">Cell membrane</location>
        <topology evidence="1">Peripheral membrane protein</topology>
        <orientation evidence="1">Cytoplasmic side</orientation>
    </subcellularLocation>
</comment>
<comment type="tissue specificity">
    <text evidence="5 6">Expressed in the dorsal marginal zone of early gastrulae (stage 10). As gastrulation proceeds, expression expands to include the lateral and ventral marginal zones, excluding the few rows of cells above the blastopore lip. Expression moves dorsally with gastrulation cell movements, and by the end of gastrulation expression is seen in dorsal mesoderm and posterior but not anterior neural ectoderm. Expression becomes down-regulated in mesoderm but remains strong in posterior ectoderm through the neurula stages. During tailbud stages, expressed in the pronephric duct, tailbud, tailtip and forming somites. In the most posterior regions, expressed in notochord and in the floorplate of the neural tube with weak expression in the roofplate. At stage 30, expressed in a complex pattern in the head including strong expression in the lens and otic vesicle.</text>
</comment>
<comment type="developmental stage">
    <text evidence="5 6">Expressed both maternally and zygotically. Zygotic expression begins at the onset of gastrulation (stage 10), and steadily increases until tadpole stage (stage 30).</text>
</comment>
<comment type="similarity">
    <text evidence="9">Belongs to the prickle / espinas / testin family.</text>
</comment>
<reference key="1">
    <citation type="journal article" date="2002" name="Mech. Dev.">
        <title>Cloning and expression of Xenopus Prickle, an orthologue of a Drosophila planar cell polarity gene.</title>
        <authorList>
            <person name="Wallingford J.B."/>
            <person name="Goto T."/>
            <person name="Keller R."/>
            <person name="Harland R.M."/>
        </authorList>
    </citation>
    <scope>NUCLEOTIDE SEQUENCE [MRNA]</scope>
    <scope>TISSUE SPECIFICITY</scope>
    <scope>DEVELOPMENTAL STAGE</scope>
    <source>
        <tissue>Gastrula</tissue>
    </source>
</reference>
<reference key="2">
    <citation type="submission" date="2005-07" db="EMBL/GenBank/DDBJ databases">
        <authorList>
            <consortium name="NIH - Xenopus Gene Collection (XGC) project"/>
        </authorList>
    </citation>
    <scope>NUCLEOTIDE SEQUENCE [LARGE SCALE MRNA]</scope>
    <source>
        <tissue>Gastrula</tissue>
    </source>
</reference>
<reference key="3">
    <citation type="journal article" date="2003" name="Curr. Biol.">
        <title>The prickle-related gene in vertebrates is essential for gastrulation cell movements.</title>
        <authorList>
            <person name="Takeuchi M."/>
            <person name="Nakabayashi J."/>
            <person name="Sakaguchi T."/>
            <person name="Yamamoto T.S."/>
            <person name="Takahashi H."/>
            <person name="Takeda H."/>
            <person name="Ueno N."/>
        </authorList>
    </citation>
    <scope>FUNCTION</scope>
    <scope>INTERACTION WITH DVL2 AND MAPK8</scope>
    <scope>TISSUE SPECIFICITY</scope>
    <scope>DEVELOPMENTAL STAGE</scope>
</reference>
<reference key="4">
    <citation type="journal article" date="2005" name="Curr. Biol.">
        <title>Planar cell polarity genes regulate polarized extracellular matrix deposition during frog gastrulation.</title>
        <authorList>
            <person name="Goto T."/>
            <person name="Davidson L."/>
            <person name="Asashima M."/>
            <person name="Keller R."/>
        </authorList>
    </citation>
    <scope>FUNCTION</scope>
</reference>
<reference key="5">
    <citation type="journal article" date="2006" name="Dev. Biol.">
        <title>Tes regulates neural crest migration and axial elongation in Xenopus.</title>
        <authorList>
            <person name="Dingwell K.S."/>
            <person name="Smith J.C."/>
        </authorList>
    </citation>
    <scope>FUNCTION</scope>
</reference>
<organism>
    <name type="scientific">Xenopus laevis</name>
    <name type="common">African clawed frog</name>
    <dbReference type="NCBI Taxonomy" id="8355"/>
    <lineage>
        <taxon>Eukaryota</taxon>
        <taxon>Metazoa</taxon>
        <taxon>Chordata</taxon>
        <taxon>Craniata</taxon>
        <taxon>Vertebrata</taxon>
        <taxon>Euteleostomi</taxon>
        <taxon>Amphibia</taxon>
        <taxon>Batrachia</taxon>
        <taxon>Anura</taxon>
        <taxon>Pipoidea</taxon>
        <taxon>Pipidae</taxon>
        <taxon>Xenopodinae</taxon>
        <taxon>Xenopus</taxon>
        <taxon>Xenopus</taxon>
    </lineage>
</organism>
<gene>
    <name type="primary">prickle1-a</name>
    <name type="synonym">pk-a</name>
    <name type="synonym">pkA</name>
    <name type="synonym">prickle-a</name>
</gene>
<keyword id="KW-1003">Cell membrane</keyword>
<keyword id="KW-0217">Developmental protein</keyword>
<keyword id="KW-0306">Gastrulation</keyword>
<keyword id="KW-0440">LIM domain</keyword>
<keyword id="KW-0449">Lipoprotein</keyword>
<keyword id="KW-0472">Membrane</keyword>
<keyword id="KW-0479">Metal-binding</keyword>
<keyword id="KW-0488">Methylation</keyword>
<keyword id="KW-0636">Prenylation</keyword>
<keyword id="KW-1185">Reference proteome</keyword>
<keyword id="KW-0677">Repeat</keyword>
<keyword id="KW-0862">Zinc</keyword>